<dbReference type="EMBL" id="CP000024">
    <property type="protein sequence ID" value="AAV62586.1"/>
    <property type="molecule type" value="Genomic_DNA"/>
</dbReference>
<dbReference type="RefSeq" id="WP_011227204.1">
    <property type="nucleotide sequence ID" value="NC_006449.1"/>
</dbReference>
<dbReference type="SMR" id="Q5LZT9"/>
<dbReference type="GeneID" id="66898854"/>
<dbReference type="KEGG" id="stc:str1008"/>
<dbReference type="HOGENOM" id="CLU_027562_9_6_9"/>
<dbReference type="GO" id="GO:0005737">
    <property type="term" value="C:cytoplasm"/>
    <property type="evidence" value="ECO:0007669"/>
    <property type="project" value="UniProtKB-SubCell"/>
</dbReference>
<dbReference type="GO" id="GO:0003677">
    <property type="term" value="F:DNA binding"/>
    <property type="evidence" value="ECO:0007669"/>
    <property type="project" value="UniProtKB-KW"/>
</dbReference>
<dbReference type="GO" id="GO:0009037">
    <property type="term" value="F:tyrosine-based site-specific recombinase activity"/>
    <property type="evidence" value="ECO:0007669"/>
    <property type="project" value="UniProtKB-UniRule"/>
</dbReference>
<dbReference type="GO" id="GO:0051301">
    <property type="term" value="P:cell division"/>
    <property type="evidence" value="ECO:0007669"/>
    <property type="project" value="UniProtKB-KW"/>
</dbReference>
<dbReference type="GO" id="GO:0007059">
    <property type="term" value="P:chromosome segregation"/>
    <property type="evidence" value="ECO:0007669"/>
    <property type="project" value="UniProtKB-UniRule"/>
</dbReference>
<dbReference type="GO" id="GO:0006310">
    <property type="term" value="P:DNA recombination"/>
    <property type="evidence" value="ECO:0007669"/>
    <property type="project" value="UniProtKB-UniRule"/>
</dbReference>
<dbReference type="CDD" id="cd00397">
    <property type="entry name" value="DNA_BRE_C"/>
    <property type="match status" value="1"/>
</dbReference>
<dbReference type="Gene3D" id="1.10.150.130">
    <property type="match status" value="1"/>
</dbReference>
<dbReference type="Gene3D" id="1.10.443.10">
    <property type="entry name" value="Intergrase catalytic core"/>
    <property type="match status" value="1"/>
</dbReference>
<dbReference type="HAMAP" id="MF_01816">
    <property type="entry name" value="Recomb_XerS"/>
    <property type="match status" value="1"/>
</dbReference>
<dbReference type="InterPro" id="IPR044068">
    <property type="entry name" value="CB"/>
</dbReference>
<dbReference type="InterPro" id="IPR011010">
    <property type="entry name" value="DNA_brk_join_enz"/>
</dbReference>
<dbReference type="InterPro" id="IPR013762">
    <property type="entry name" value="Integrase-like_cat_sf"/>
</dbReference>
<dbReference type="InterPro" id="IPR002104">
    <property type="entry name" value="Integrase_catalytic"/>
</dbReference>
<dbReference type="InterPro" id="IPR010998">
    <property type="entry name" value="Integrase_recombinase_N"/>
</dbReference>
<dbReference type="InterPro" id="IPR004107">
    <property type="entry name" value="Integrase_SAM-like_N"/>
</dbReference>
<dbReference type="InterPro" id="IPR023670">
    <property type="entry name" value="Recomb_XerS"/>
</dbReference>
<dbReference type="InterPro" id="IPR050090">
    <property type="entry name" value="Tyrosine_recombinase_XerCD"/>
</dbReference>
<dbReference type="NCBIfam" id="NF003462">
    <property type="entry name" value="PRK05084.1"/>
    <property type="match status" value="1"/>
</dbReference>
<dbReference type="PANTHER" id="PTHR30349">
    <property type="entry name" value="PHAGE INTEGRASE-RELATED"/>
    <property type="match status" value="1"/>
</dbReference>
<dbReference type="PANTHER" id="PTHR30349:SF77">
    <property type="entry name" value="TYROSINE RECOMBINASE XERC"/>
    <property type="match status" value="1"/>
</dbReference>
<dbReference type="Pfam" id="PF02899">
    <property type="entry name" value="Phage_int_SAM_1"/>
    <property type="match status" value="1"/>
</dbReference>
<dbReference type="Pfam" id="PF00589">
    <property type="entry name" value="Phage_integrase"/>
    <property type="match status" value="1"/>
</dbReference>
<dbReference type="SUPFAM" id="SSF56349">
    <property type="entry name" value="DNA breaking-rejoining enzymes"/>
    <property type="match status" value="1"/>
</dbReference>
<dbReference type="PROSITE" id="PS51900">
    <property type="entry name" value="CB"/>
    <property type="match status" value="1"/>
</dbReference>
<dbReference type="PROSITE" id="PS51898">
    <property type="entry name" value="TYR_RECOMBINASE"/>
    <property type="match status" value="1"/>
</dbReference>
<name>XERS_STRT1</name>
<gene>
    <name evidence="1" type="primary">xerS</name>
    <name type="ordered locus">str1008</name>
</gene>
<evidence type="ECO:0000255" key="1">
    <source>
        <dbReference type="HAMAP-Rule" id="MF_01816"/>
    </source>
</evidence>
<evidence type="ECO:0000255" key="2">
    <source>
        <dbReference type="PROSITE-ProRule" id="PRU01246"/>
    </source>
</evidence>
<evidence type="ECO:0000255" key="3">
    <source>
        <dbReference type="PROSITE-ProRule" id="PRU01248"/>
    </source>
</evidence>
<comment type="function">
    <text evidence="1">Site-specific tyrosine recombinase, which acts by catalyzing the cutting and rejoining of the recombining DNA molecules. Essential to convert dimers of the bacterial chromosome into monomers to permit their segregation at cell division.</text>
</comment>
<comment type="activity regulation">
    <text evidence="1">FtsK is required for recombination.</text>
</comment>
<comment type="subcellular location">
    <subcellularLocation>
        <location evidence="1">Cytoplasm</location>
    </subcellularLocation>
</comment>
<comment type="similarity">
    <text evidence="1">Belongs to the 'phage' integrase family. XerS subfamily.</text>
</comment>
<feature type="chain" id="PRO_1000070251" description="Tyrosine recombinase XerS">
    <location>
        <begin position="1"/>
        <end position="356"/>
    </location>
</feature>
<feature type="domain" description="Core-binding (CB)" evidence="3">
    <location>
        <begin position="16"/>
        <end position="121"/>
    </location>
</feature>
<feature type="domain" description="Tyr recombinase" evidence="2">
    <location>
        <begin position="169"/>
        <end position="354"/>
    </location>
</feature>
<feature type="active site" evidence="1">
    <location>
        <position position="210"/>
    </location>
</feature>
<feature type="active site" evidence="1">
    <location>
        <position position="234"/>
    </location>
</feature>
<feature type="active site" evidence="1">
    <location>
        <position position="306"/>
    </location>
</feature>
<feature type="active site" evidence="1">
    <location>
        <position position="309"/>
    </location>
</feature>
<feature type="active site" evidence="1">
    <location>
        <position position="332"/>
    </location>
</feature>
<feature type="active site" description="O-(3'-phospho-DNA)-tyrosine intermediate" evidence="1">
    <location>
        <position position="341"/>
    </location>
</feature>
<reference key="1">
    <citation type="journal article" date="2004" name="Nat. Biotechnol.">
        <title>Complete sequence and comparative genome analysis of the dairy bacterium Streptococcus thermophilus.</title>
        <authorList>
            <person name="Bolotin A."/>
            <person name="Quinquis B."/>
            <person name="Renault P."/>
            <person name="Sorokin A."/>
            <person name="Ehrlich S.D."/>
            <person name="Kulakauskas S."/>
            <person name="Lapidus A."/>
            <person name="Goltsman E."/>
            <person name="Mazur M."/>
            <person name="Pusch G.D."/>
            <person name="Fonstein M."/>
            <person name="Overbeek R."/>
            <person name="Kyprides N."/>
            <person name="Purnelle B."/>
            <person name="Prozzi D."/>
            <person name="Ngui K."/>
            <person name="Masuy D."/>
            <person name="Hancy F."/>
            <person name="Burteau S."/>
            <person name="Boutry M."/>
            <person name="Delcour J."/>
            <person name="Goffeau A."/>
            <person name="Hols P."/>
        </authorList>
    </citation>
    <scope>NUCLEOTIDE SEQUENCE [LARGE SCALE GENOMIC DNA]</scope>
    <source>
        <strain>CNRZ 1066</strain>
    </source>
</reference>
<protein>
    <recommendedName>
        <fullName evidence="1">Tyrosine recombinase XerS</fullName>
    </recommendedName>
</protein>
<accession>Q5LZT9</accession>
<sequence>MKRELLLEKIEEYKSLMPWFVLEYYQSKLSVPYSFTTLYEYLKEYKRFFNWLIDSGISDADDIASIHIKTLENLTKKDMESFVLYLRERPSLNTYSKKQGVSQTTINRTLSALSSLYKYLTEEVEGPDGEPYFYRNVMKKISTKKKKETLAARAENIKQKLFLGDETMKFLDYVENEYEVKLSNRAKSSFYKNKERDLAIIALLLSSGVRLSEAVNLDLKDINLKRMVIDVTRKGGQRDSVNMASFARPYLENYLSIRNKRYKAEKQDVALFLTEYRGVPNRIDASSIEKMVAKYSQDFKIRVTPHKLRHTLATRLYDATKSQVLVSHQLGHASTQVTDLYTHIVNDEQKNALDNL</sequence>
<keyword id="KW-0131">Cell cycle</keyword>
<keyword id="KW-0132">Cell division</keyword>
<keyword id="KW-0159">Chromosome partition</keyword>
<keyword id="KW-0963">Cytoplasm</keyword>
<keyword id="KW-0229">DNA integration</keyword>
<keyword id="KW-0233">DNA recombination</keyword>
<keyword id="KW-0238">DNA-binding</keyword>
<organism>
    <name type="scientific">Streptococcus thermophilus (strain CNRZ 1066)</name>
    <dbReference type="NCBI Taxonomy" id="299768"/>
    <lineage>
        <taxon>Bacteria</taxon>
        <taxon>Bacillati</taxon>
        <taxon>Bacillota</taxon>
        <taxon>Bacilli</taxon>
        <taxon>Lactobacillales</taxon>
        <taxon>Streptococcaceae</taxon>
        <taxon>Streptococcus</taxon>
    </lineage>
</organism>
<proteinExistence type="inferred from homology"/>